<dbReference type="EC" id="1.-.-.-" evidence="9"/>
<dbReference type="EMBL" id="BN001302">
    <property type="protein sequence ID" value="CBF73446.1"/>
    <property type="molecule type" value="Genomic_DNA"/>
</dbReference>
<dbReference type="EMBL" id="AACD01000135">
    <property type="protein sequence ID" value="EAA59535.1"/>
    <property type="molecule type" value="Genomic_DNA"/>
</dbReference>
<dbReference type="RefSeq" id="XP_681150.1">
    <property type="nucleotide sequence ID" value="XM_676058.1"/>
</dbReference>
<dbReference type="SMR" id="Q5AUZ9"/>
<dbReference type="STRING" id="227321.Q5AUZ9"/>
<dbReference type="GlyCosmos" id="Q5AUZ9">
    <property type="glycosylation" value="1 site, No reported glycans"/>
</dbReference>
<dbReference type="EnsemblFungi" id="CBF73446">
    <property type="protein sequence ID" value="CBF73446"/>
    <property type="gene ID" value="ANIA_07881"/>
</dbReference>
<dbReference type="GeneID" id="2869072"/>
<dbReference type="KEGG" id="ani:ANIA_07881"/>
<dbReference type="VEuPathDB" id="FungiDB:AN7881"/>
<dbReference type="eggNOG" id="KOG0157">
    <property type="taxonomic scope" value="Eukaryota"/>
</dbReference>
<dbReference type="HOGENOM" id="CLU_001570_14_11_1"/>
<dbReference type="InParanoid" id="Q5AUZ9"/>
<dbReference type="OMA" id="HILWRFD"/>
<dbReference type="OrthoDB" id="1470350at2759"/>
<dbReference type="Proteomes" id="UP000000560">
    <property type="component" value="Chromosome II"/>
</dbReference>
<dbReference type="GO" id="GO:0016020">
    <property type="term" value="C:membrane"/>
    <property type="evidence" value="ECO:0007669"/>
    <property type="project" value="UniProtKB-SubCell"/>
</dbReference>
<dbReference type="GO" id="GO:0020037">
    <property type="term" value="F:heme binding"/>
    <property type="evidence" value="ECO:0007669"/>
    <property type="project" value="InterPro"/>
</dbReference>
<dbReference type="GO" id="GO:0005506">
    <property type="term" value="F:iron ion binding"/>
    <property type="evidence" value="ECO:0007669"/>
    <property type="project" value="InterPro"/>
</dbReference>
<dbReference type="GO" id="GO:0004497">
    <property type="term" value="F:monooxygenase activity"/>
    <property type="evidence" value="ECO:0007669"/>
    <property type="project" value="UniProtKB-KW"/>
</dbReference>
<dbReference type="GO" id="GO:0016705">
    <property type="term" value="F:oxidoreductase activity, acting on paired donors, with incorporation or reduction of molecular oxygen"/>
    <property type="evidence" value="ECO:0007669"/>
    <property type="project" value="InterPro"/>
</dbReference>
<dbReference type="GO" id="GO:0044550">
    <property type="term" value="P:secondary metabolite biosynthetic process"/>
    <property type="evidence" value="ECO:0007669"/>
    <property type="project" value="UniProtKB-ARBA"/>
</dbReference>
<dbReference type="CDD" id="cd11061">
    <property type="entry name" value="CYP67-like"/>
    <property type="match status" value="1"/>
</dbReference>
<dbReference type="FunFam" id="1.10.630.10:FF:000063">
    <property type="entry name" value="Cytochrome P450 monooxygenase"/>
    <property type="match status" value="1"/>
</dbReference>
<dbReference type="Gene3D" id="1.10.630.10">
    <property type="entry name" value="Cytochrome P450"/>
    <property type="match status" value="1"/>
</dbReference>
<dbReference type="InterPro" id="IPR001128">
    <property type="entry name" value="Cyt_P450"/>
</dbReference>
<dbReference type="InterPro" id="IPR017972">
    <property type="entry name" value="Cyt_P450_CS"/>
</dbReference>
<dbReference type="InterPro" id="IPR002401">
    <property type="entry name" value="Cyt_P450_E_grp-I"/>
</dbReference>
<dbReference type="InterPro" id="IPR036396">
    <property type="entry name" value="Cyt_P450_sf"/>
</dbReference>
<dbReference type="InterPro" id="IPR050121">
    <property type="entry name" value="Cytochrome_P450_monoxygenase"/>
</dbReference>
<dbReference type="PANTHER" id="PTHR24305">
    <property type="entry name" value="CYTOCHROME P450"/>
    <property type="match status" value="1"/>
</dbReference>
<dbReference type="PANTHER" id="PTHR24305:SF237">
    <property type="entry name" value="CYTOCHROME P450 MONOOXYGENASE ATNE-RELATED"/>
    <property type="match status" value="1"/>
</dbReference>
<dbReference type="Pfam" id="PF00067">
    <property type="entry name" value="p450"/>
    <property type="match status" value="1"/>
</dbReference>
<dbReference type="PRINTS" id="PR00463">
    <property type="entry name" value="EP450I"/>
</dbReference>
<dbReference type="PRINTS" id="PR00385">
    <property type="entry name" value="P450"/>
</dbReference>
<dbReference type="SUPFAM" id="SSF48264">
    <property type="entry name" value="Cytochrome P450"/>
    <property type="match status" value="1"/>
</dbReference>
<dbReference type="PROSITE" id="PS00086">
    <property type="entry name" value="CYTOCHROME_P450"/>
    <property type="match status" value="1"/>
</dbReference>
<name>ATNE_EMENI</name>
<keyword id="KW-0325">Glycoprotein</keyword>
<keyword id="KW-0349">Heme</keyword>
<keyword id="KW-0408">Iron</keyword>
<keyword id="KW-0472">Membrane</keyword>
<keyword id="KW-0479">Metal-binding</keyword>
<keyword id="KW-0503">Monooxygenase</keyword>
<keyword id="KW-0560">Oxidoreductase</keyword>
<keyword id="KW-1185">Reference proteome</keyword>
<keyword id="KW-0812">Transmembrane</keyword>
<keyword id="KW-1133">Transmembrane helix</keyword>
<protein>
    <recommendedName>
        <fullName evidence="7">Cytochrome P450 monooxygenase atnE</fullName>
        <ecNumber evidence="9">1.-.-.-</ecNumber>
    </recommendedName>
    <alternativeName>
        <fullName evidence="7">Aspercryptin biosynthesis cluster protein E</fullName>
    </alternativeName>
</protein>
<gene>
    <name evidence="7" type="primary">atnE</name>
    <name type="ORF">ANIA_07881</name>
</gene>
<comment type="function">
    <text evidence="4 5 6">Cytochrome P450 monooxygenase; part of the gene cluster that mediates the biosynthesis of aspercryptins, linear lipopeptides built from six amino acids including 2 highly unusual and nonproteogenic amino acids, 2-amino-octanoic acid (2aoa) and 2-amino-dodecanol (2adol) (PubMed:23248299, PubMed:26563584, PubMed:27310134). The core structure of aspercryptins is as follows: Ser/Ala-Thr-Ile/Val-2aoa-Asn-2adol (PubMed:27310134). The first step of aspercryptin biosynthesis is the generation of the fatty acid precursors, octanoic and dodecanoic acids, by the FAS subunits atnF and atnM (PubMed:26563584, PubMed:27310134). The fatty acid precursors are likely transformed into the corresponding alpha-amino fatty acids in three steps (PubMed:26563584, PubMed:27310134). First, they are hydroxylated by the cytochrome P450 monooxygenase atnE, then oxidized to the corresponding alpha-keto acids by the NAD(P)-dependent oxidoreductase atnD, and finally converted to the alpha-amino fatty acids by the PLP-dependent aminotransferases atnH or atnJ (PubMed:26563584, PubMed:27310134). the alpha-amino fatty acids, 2-amino-octanoic and 2-amino-dodecanoic acids, are recognized, activated, and covalently tethered to the NRPS atnA by its fourth and sixth adenylation domains (PubMed:27310134). The second module of atnA is the Thr module and contains an epimerase (E) domain responsible for the epimerization of Thr to D-allo-Thr (PubMed:26563584). Additionally, despite atnA having only one epimerase domain, the first amino acid of aspercryptin A1 is D-Ser, suggesting that serine is either loaded directly as D-Ser on the first module or that the epimerase domain in the threonine module epimerizes both L-Ser and L-Thr (PubMed:27310134). After condensation of the hexapeptide of aspercryptin, the C-terminal reductase (TE) domain might be involved in the reductive release and production of the aldehyde hexapeptide (PubMed:26563584). Further reduction would generate aspercryptins (PubMed:26563584, PubMed:27310134). The variety of aspercryptins produced reflects the flexibility of the atnA NRPS, allowing incorporation of alanine instead of serine, valine for isoleucine, and a C10 fatty amino alcohol instead of the C12 version (PubMed:27310134). AtnB seems to be involved in the selectivity for Ile versus Val by the third module (PubMed:26563584). Moreover, type B, C and D aspercryptins have an additional N-terminal cichorine, acetyl and propionyl group respectively (PubMed:27310134).</text>
</comment>
<comment type="cofactor">
    <cofactor evidence="1">
        <name>heme</name>
        <dbReference type="ChEBI" id="CHEBI:30413"/>
    </cofactor>
</comment>
<comment type="pathway">
    <text evidence="5">Secondary metabolite biosynthesis.</text>
</comment>
<comment type="subcellular location">
    <subcellularLocation>
        <location evidence="2">Membrane</location>
        <topology evidence="2">Single-pass membrane protein</topology>
    </subcellularLocation>
</comment>
<comment type="induction">
    <text evidence="6">Expression is positively regulated by the aspercryptin cluser-specific transcription factor atnN (PubMed:27310134).</text>
</comment>
<comment type="disruption phenotype">
    <text evidence="5">Abolishes the production of aspercryptin (PubMed:26563584).</text>
</comment>
<comment type="similarity">
    <text evidence="8">Belongs to the cytochrome P450 family.</text>
</comment>
<feature type="chain" id="PRO_0000444123" description="Cytochrome P450 monooxygenase atnE">
    <location>
        <begin position="1"/>
        <end position="518"/>
    </location>
</feature>
<feature type="transmembrane region" description="Helical" evidence="2">
    <location>
        <begin position="11"/>
        <end position="31"/>
    </location>
</feature>
<feature type="binding site" description="axial binding residue" evidence="1">
    <location>
        <position position="458"/>
    </location>
    <ligand>
        <name>heme</name>
        <dbReference type="ChEBI" id="CHEBI:30413"/>
    </ligand>
    <ligandPart>
        <name>Fe</name>
        <dbReference type="ChEBI" id="CHEBI:18248"/>
    </ligandPart>
</feature>
<feature type="glycosylation site" description="N-linked (GlcNAc...) asparagine" evidence="3">
    <location>
        <position position="184"/>
    </location>
</feature>
<accession>Q5AUZ9</accession>
<accession>A0A1U8QUH5</accession>
<accession>C8V3Y6</accession>
<organism>
    <name type="scientific">Emericella nidulans (strain FGSC A4 / ATCC 38163 / CBS 112.46 / NRRL 194 / M139)</name>
    <name type="common">Aspergillus nidulans</name>
    <dbReference type="NCBI Taxonomy" id="227321"/>
    <lineage>
        <taxon>Eukaryota</taxon>
        <taxon>Fungi</taxon>
        <taxon>Dikarya</taxon>
        <taxon>Ascomycota</taxon>
        <taxon>Pezizomycotina</taxon>
        <taxon>Eurotiomycetes</taxon>
        <taxon>Eurotiomycetidae</taxon>
        <taxon>Eurotiales</taxon>
        <taxon>Aspergillaceae</taxon>
        <taxon>Aspergillus</taxon>
        <taxon>Aspergillus subgen. Nidulantes</taxon>
    </lineage>
</organism>
<evidence type="ECO:0000250" key="1">
    <source>
        <dbReference type="UniProtKB" id="P04798"/>
    </source>
</evidence>
<evidence type="ECO:0000255" key="2"/>
<evidence type="ECO:0000255" key="3">
    <source>
        <dbReference type="PROSITE-ProRule" id="PRU00498"/>
    </source>
</evidence>
<evidence type="ECO:0000269" key="4">
    <source>
    </source>
</evidence>
<evidence type="ECO:0000269" key="5">
    <source>
    </source>
</evidence>
<evidence type="ECO:0000269" key="6">
    <source>
    </source>
</evidence>
<evidence type="ECO:0000303" key="7">
    <source>
    </source>
</evidence>
<evidence type="ECO:0000305" key="8"/>
<evidence type="ECO:0000305" key="9">
    <source>
    </source>
</evidence>
<proteinExistence type="evidence at transcript level"/>
<reference key="1">
    <citation type="journal article" date="2005" name="Nature">
        <title>Sequencing of Aspergillus nidulans and comparative analysis with A. fumigatus and A. oryzae.</title>
        <authorList>
            <person name="Galagan J.E."/>
            <person name="Calvo S.E."/>
            <person name="Cuomo C."/>
            <person name="Ma L.-J."/>
            <person name="Wortman J.R."/>
            <person name="Batzoglou S."/>
            <person name="Lee S.-I."/>
            <person name="Bastuerkmen M."/>
            <person name="Spevak C.C."/>
            <person name="Clutterbuck J."/>
            <person name="Kapitonov V."/>
            <person name="Jurka J."/>
            <person name="Scazzocchio C."/>
            <person name="Farman M.L."/>
            <person name="Butler J."/>
            <person name="Purcell S."/>
            <person name="Harris S."/>
            <person name="Braus G.H."/>
            <person name="Draht O."/>
            <person name="Busch S."/>
            <person name="D'Enfert C."/>
            <person name="Bouchier C."/>
            <person name="Goldman G.H."/>
            <person name="Bell-Pedersen D."/>
            <person name="Griffiths-Jones S."/>
            <person name="Doonan J.H."/>
            <person name="Yu J."/>
            <person name="Vienken K."/>
            <person name="Pain A."/>
            <person name="Freitag M."/>
            <person name="Selker E.U."/>
            <person name="Archer D.B."/>
            <person name="Penalva M.A."/>
            <person name="Oakley B.R."/>
            <person name="Momany M."/>
            <person name="Tanaka T."/>
            <person name="Kumagai T."/>
            <person name="Asai K."/>
            <person name="Machida M."/>
            <person name="Nierman W.C."/>
            <person name="Denning D.W."/>
            <person name="Caddick M.X."/>
            <person name="Hynes M."/>
            <person name="Paoletti M."/>
            <person name="Fischer R."/>
            <person name="Miller B.L."/>
            <person name="Dyer P.S."/>
            <person name="Sachs M.S."/>
            <person name="Osmani S.A."/>
            <person name="Birren B.W."/>
        </authorList>
    </citation>
    <scope>NUCLEOTIDE SEQUENCE [LARGE SCALE GENOMIC DNA]</scope>
    <source>
        <strain>FGSC A4 / ATCC 38163 / CBS 112.46 / NRRL 194 / M139</strain>
    </source>
</reference>
<reference key="2">
    <citation type="journal article" date="2009" name="Fungal Genet. Biol.">
        <title>The 2008 update of the Aspergillus nidulans genome annotation: a community effort.</title>
        <authorList>
            <person name="Wortman J.R."/>
            <person name="Gilsenan J.M."/>
            <person name="Joardar V."/>
            <person name="Deegan J."/>
            <person name="Clutterbuck J."/>
            <person name="Andersen M.R."/>
            <person name="Archer D."/>
            <person name="Bencina M."/>
            <person name="Braus G."/>
            <person name="Coutinho P."/>
            <person name="von Dohren H."/>
            <person name="Doonan J."/>
            <person name="Driessen A.J."/>
            <person name="Durek P."/>
            <person name="Espeso E."/>
            <person name="Fekete E."/>
            <person name="Flipphi M."/>
            <person name="Estrada C.G."/>
            <person name="Geysens S."/>
            <person name="Goldman G."/>
            <person name="de Groot P.W."/>
            <person name="Hansen K."/>
            <person name="Harris S.D."/>
            <person name="Heinekamp T."/>
            <person name="Helmstaedt K."/>
            <person name="Henrissat B."/>
            <person name="Hofmann G."/>
            <person name="Homan T."/>
            <person name="Horio T."/>
            <person name="Horiuchi H."/>
            <person name="James S."/>
            <person name="Jones M."/>
            <person name="Karaffa L."/>
            <person name="Karanyi Z."/>
            <person name="Kato M."/>
            <person name="Keller N."/>
            <person name="Kelly D.E."/>
            <person name="Kiel J.A."/>
            <person name="Kim J.M."/>
            <person name="van der Klei I.J."/>
            <person name="Klis F.M."/>
            <person name="Kovalchuk A."/>
            <person name="Krasevec N."/>
            <person name="Kubicek C.P."/>
            <person name="Liu B."/>
            <person name="Maccabe A."/>
            <person name="Meyer V."/>
            <person name="Mirabito P."/>
            <person name="Miskei M."/>
            <person name="Mos M."/>
            <person name="Mullins J."/>
            <person name="Nelson D.R."/>
            <person name="Nielsen J."/>
            <person name="Oakley B.R."/>
            <person name="Osmani S.A."/>
            <person name="Pakula T."/>
            <person name="Paszewski A."/>
            <person name="Paulsen I."/>
            <person name="Pilsyk S."/>
            <person name="Pocsi I."/>
            <person name="Punt P.J."/>
            <person name="Ram A.F."/>
            <person name="Ren Q."/>
            <person name="Robellet X."/>
            <person name="Robson G."/>
            <person name="Seiboth B."/>
            <person name="van Solingen P."/>
            <person name="Specht T."/>
            <person name="Sun J."/>
            <person name="Taheri-Talesh N."/>
            <person name="Takeshita N."/>
            <person name="Ussery D."/>
            <person name="vanKuyk P.A."/>
            <person name="Visser H."/>
            <person name="van de Vondervoort P.J."/>
            <person name="de Vries R.P."/>
            <person name="Walton J."/>
            <person name="Xiang X."/>
            <person name="Xiong Y."/>
            <person name="Zeng A.P."/>
            <person name="Brandt B.W."/>
            <person name="Cornell M.J."/>
            <person name="van den Hondel C.A."/>
            <person name="Visser J."/>
            <person name="Oliver S.G."/>
            <person name="Turner G."/>
        </authorList>
    </citation>
    <scope>GENOME REANNOTATION</scope>
    <source>
        <strain>FGSC A4 / ATCC 38163 / CBS 112.46 / NRRL 194 / M139</strain>
    </source>
</reference>
<reference key="3">
    <citation type="journal article" date="2013" name="Proc. Natl. Acad. Sci. U.S.A.">
        <title>Accurate prediction of secondary metabolite gene clusters in filamentous fungi.</title>
        <authorList>
            <person name="Andersen M.R."/>
            <person name="Nielsen J.B."/>
            <person name="Klitgaard A."/>
            <person name="Petersen L.M."/>
            <person name="Zachariasen M."/>
            <person name="Hansen T.J."/>
            <person name="Blicher L.H."/>
            <person name="Gotfredsen C.H."/>
            <person name="Larsen T.O."/>
            <person name="Nielsen K.F."/>
            <person name="Mortensen U.H."/>
        </authorList>
    </citation>
    <scope>IDENTIFICATION OF THE CLUSTER</scope>
</reference>
<reference key="4">
    <citation type="journal article" date="2016" name="ACS Chem. Biol.">
        <title>New aspercryptins, lipopeptide natural products, revealed by HDAC inhibition in Aspergillus nidulans.</title>
        <authorList>
            <person name="Henke M.T."/>
            <person name="Soukup A.A."/>
            <person name="Goering A.W."/>
            <person name="McClure R.A."/>
            <person name="Thomson R.J."/>
            <person name="Keller N.P."/>
            <person name="Kelleher N.L."/>
        </authorList>
    </citation>
    <scope>FUNCTION</scope>
    <scope>INDUCTION</scope>
</reference>
<reference key="5">
    <citation type="journal article" date="2016" name="Angew. Chem. Int. Ed.">
        <title>Development of genetic dereplication strains in Aspergillus nidulans results in the discovery of aspercryptin.</title>
        <authorList>
            <person name="Chiang Y.M."/>
            <person name="Ahuja M."/>
            <person name="Oakley C.E."/>
            <person name="Entwistle R."/>
            <person name="Asokan A."/>
            <person name="Zutz C."/>
            <person name="Wang C.C."/>
            <person name="Oakley B.R."/>
        </authorList>
    </citation>
    <scope>FUNCTION</scope>
    <scope>DISRUPTION PHENOTYPE</scope>
    <scope>PATHWAY</scope>
</reference>
<sequence length="518" mass="58116">MLPTYFGTSNFLAAFAVWMGVVVLAFAIFCVRRLYFHPYSKYPGPLLGKLTNYYAVYHSWKGDQHIDMWRCHEKYGPYVRYGPNELSINTAAGLKEIYSHGRNFKKSVKYNAMVHQAANTLTTIDKRKHGKKRRLISQAFSDAAFRSYEETIQQKIAQLCTALRRRDDDSNEIVPDGNWGPAKNMSHWCDWFTFDVMCSVIFGVPWSSLTEKTYRNVPHLIEVSNVRVGCLIEAGGSKNMKIDKYLFPAAIAARNQFVKFVNDIIRQGMAMSAKGSLKGAFALLRDATDPETQEPLSFKELCGESATLVVAGTDTTSTALAASIYYLCNHPKVYERAVQEVRSTFQSRAEIGLGPKVNSCTYLRAVIEESMRLSPSAPGPLWRQADAGGATVDGQYIPQGLEAGTCVYAIQHHPEIYPQPFKFVPERWLGPEAVPEQYRSDYSPFAGFTPFSIGPRGCIGKPLAYIELTLTLCHILYAFDMRLPQGVNVNEDAEYQLALHITAAKEGPLVEFRPRTVV</sequence>